<organism>
    <name type="scientific">Thermosynechococcus vestitus (strain NIES-2133 / IAM M-273 / BP-1)</name>
    <dbReference type="NCBI Taxonomy" id="197221"/>
    <lineage>
        <taxon>Bacteria</taxon>
        <taxon>Bacillati</taxon>
        <taxon>Cyanobacteriota</taxon>
        <taxon>Cyanophyceae</taxon>
        <taxon>Acaryochloridales</taxon>
        <taxon>Thermosynechococcaceae</taxon>
        <taxon>Thermosynechococcus</taxon>
    </lineage>
</organism>
<keyword id="KW-0997">Cell inner membrane</keyword>
<keyword id="KW-1003">Cell membrane</keyword>
<keyword id="KW-0169">Cobalamin biosynthesis</keyword>
<keyword id="KW-0170">Cobalt</keyword>
<keyword id="KW-0171">Cobalt transport</keyword>
<keyword id="KW-0406">Ion transport</keyword>
<keyword id="KW-0472">Membrane</keyword>
<keyword id="KW-1185">Reference proteome</keyword>
<keyword id="KW-0732">Signal</keyword>
<keyword id="KW-0812">Transmembrane</keyword>
<keyword id="KW-1133">Transmembrane helix</keyword>
<keyword id="KW-0813">Transport</keyword>
<reference key="1">
    <citation type="journal article" date="2002" name="DNA Res.">
        <title>Complete genome structure of the thermophilic cyanobacterium Thermosynechococcus elongatus BP-1.</title>
        <authorList>
            <person name="Nakamura Y."/>
            <person name="Kaneko T."/>
            <person name="Sato S."/>
            <person name="Ikeuchi M."/>
            <person name="Katoh H."/>
            <person name="Sasamoto S."/>
            <person name="Watanabe A."/>
            <person name="Iriguchi M."/>
            <person name="Kawashima K."/>
            <person name="Kimura T."/>
            <person name="Kishida Y."/>
            <person name="Kiyokawa C."/>
            <person name="Kohara M."/>
            <person name="Matsumoto M."/>
            <person name="Matsuno A."/>
            <person name="Nakazaki N."/>
            <person name="Shimpo S."/>
            <person name="Sugimoto M."/>
            <person name="Takeuchi C."/>
            <person name="Yamada M."/>
            <person name="Tabata S."/>
        </authorList>
    </citation>
    <scope>NUCLEOTIDE SEQUENCE [LARGE SCALE GENOMIC DNA]</scope>
    <source>
        <strain>NIES-2133 / IAM M-273 / BP-1</strain>
    </source>
</reference>
<name>CBIM_THEVB</name>
<accession>Q8DG81</accession>
<comment type="function">
    <text evidence="1">Part of the energy-coupling factor (ECF) transporter complex CbiMNOQ involved in cobalt import.</text>
</comment>
<comment type="pathway">
    <text evidence="1">Cofactor biosynthesis; adenosylcobalamin biosynthesis.</text>
</comment>
<comment type="subunit">
    <text evidence="1">Forms an energy-coupling factor (ECF) transporter complex composed of an ATP-binding protein (A component, CbiO), a transmembrane protein (T component, CbiQ) and 2 possible substrate-capture proteins (S components, CbiM and CbiN) of unknown stoichimetry.</text>
</comment>
<comment type="subcellular location">
    <subcellularLocation>
        <location evidence="1">Cell inner membrane</location>
        <topology evidence="1">Multi-pass membrane protein</topology>
    </subcellularLocation>
</comment>
<comment type="similarity">
    <text evidence="1">Belongs to the CbiM family.</text>
</comment>
<proteinExistence type="inferred from homology"/>
<evidence type="ECO:0000255" key="1">
    <source>
        <dbReference type="HAMAP-Rule" id="MF_01462"/>
    </source>
</evidence>
<dbReference type="EMBL" id="BA000039">
    <property type="protein sequence ID" value="BAC09994.1"/>
    <property type="molecule type" value="Genomic_DNA"/>
</dbReference>
<dbReference type="RefSeq" id="NP_683232.2">
    <property type="nucleotide sequence ID" value="NC_004113.1"/>
</dbReference>
<dbReference type="SMR" id="Q8DG81"/>
<dbReference type="STRING" id="197221.gene:10749063"/>
<dbReference type="EnsemblBacteria" id="BAC09994">
    <property type="protein sequence ID" value="BAC09994"/>
    <property type="gene ID" value="BAC09994"/>
</dbReference>
<dbReference type="KEGG" id="tel:tll2442"/>
<dbReference type="PATRIC" id="fig|197221.4.peg.2566"/>
<dbReference type="eggNOG" id="COG0310">
    <property type="taxonomic scope" value="Bacteria"/>
</dbReference>
<dbReference type="UniPathway" id="UPA00148"/>
<dbReference type="Proteomes" id="UP000000440">
    <property type="component" value="Chromosome"/>
</dbReference>
<dbReference type="GO" id="GO:0043190">
    <property type="term" value="C:ATP-binding cassette (ABC) transporter complex"/>
    <property type="evidence" value="ECO:0007669"/>
    <property type="project" value="InterPro"/>
</dbReference>
<dbReference type="GO" id="GO:0015087">
    <property type="term" value="F:cobalt ion transmembrane transporter activity"/>
    <property type="evidence" value="ECO:0007669"/>
    <property type="project" value="UniProtKB-UniRule"/>
</dbReference>
<dbReference type="GO" id="GO:0009236">
    <property type="term" value="P:cobalamin biosynthetic process"/>
    <property type="evidence" value="ECO:0007669"/>
    <property type="project" value="UniProtKB-UniRule"/>
</dbReference>
<dbReference type="FunFam" id="1.10.1760.20:FF:000001">
    <property type="entry name" value="Cobalt transport protein CbiM"/>
    <property type="match status" value="1"/>
</dbReference>
<dbReference type="Gene3D" id="1.10.1760.20">
    <property type="match status" value="1"/>
</dbReference>
<dbReference type="HAMAP" id="MF_01462">
    <property type="entry name" value="CbiM"/>
    <property type="match status" value="1"/>
</dbReference>
<dbReference type="InterPro" id="IPR018024">
    <property type="entry name" value="CbiM"/>
</dbReference>
<dbReference type="InterPro" id="IPR002751">
    <property type="entry name" value="CbiM/NikMN"/>
</dbReference>
<dbReference type="NCBIfam" id="TIGR00123">
    <property type="entry name" value="cbiM"/>
    <property type="match status" value="1"/>
</dbReference>
<dbReference type="NCBIfam" id="NF006184">
    <property type="entry name" value="PRK08319.1"/>
    <property type="match status" value="1"/>
</dbReference>
<dbReference type="PANTHER" id="PTHR43627">
    <property type="match status" value="1"/>
</dbReference>
<dbReference type="PANTHER" id="PTHR43627:SF1">
    <property type="entry name" value="COBALT TRANSPORT PROTEIN CBIM"/>
    <property type="match status" value="1"/>
</dbReference>
<dbReference type="Pfam" id="PF01891">
    <property type="entry name" value="CbiM"/>
    <property type="match status" value="1"/>
</dbReference>
<gene>
    <name evidence="1" type="primary">cbiM</name>
    <name type="ordered locus">tll2442</name>
</gene>
<sequence>MVKPTQAKRYASLGAIALLTTSLVVASPNPALAMHISEGFLPLGWAVGWWLAFLPFLAWGLWSLQQQIKQHSESVLLVALAGAYAFVVSSLKIPSVTGSCSHPIGIALGAILFRPPLMAVLGTLVLLFQSLLIAHGGLTTLGANAFSMAVVGPWLAWLTYCGVSRLRVKPAIALFAASFISNVGTYTLTSLQLALAFPDSVGGLATSFAKFGTLFAVTQIPLAISEGLLTVLVWNWLTTYCVAELQALRLLPQEELP</sequence>
<protein>
    <recommendedName>
        <fullName evidence="1">Cobalt transport protein CbiM</fullName>
    </recommendedName>
    <alternativeName>
        <fullName evidence="1">Energy-coupling factor transporter probable substrate-capture protein CbiM</fullName>
        <shortName evidence="1">ECF transporter S component CbiM</shortName>
    </alternativeName>
</protein>
<feature type="signal peptide" evidence="1">
    <location>
        <begin position="1"/>
        <end position="33"/>
    </location>
</feature>
<feature type="chain" id="PRO_0000411150" description="Cobalt transport protein CbiM">
    <location>
        <begin position="34"/>
        <end position="257"/>
    </location>
</feature>
<feature type="transmembrane region" description="Helical" evidence="1">
    <location>
        <begin position="39"/>
        <end position="59"/>
    </location>
</feature>
<feature type="transmembrane region" description="Helical" evidence="1">
    <location>
        <begin position="74"/>
        <end position="94"/>
    </location>
</feature>
<feature type="transmembrane region" description="Helical" evidence="1">
    <location>
        <begin position="117"/>
        <end position="137"/>
    </location>
</feature>
<feature type="transmembrane region" description="Helical" evidence="1">
    <location>
        <begin position="138"/>
        <end position="158"/>
    </location>
</feature>
<feature type="transmembrane region" description="Helical" evidence="1">
    <location>
        <begin position="171"/>
        <end position="191"/>
    </location>
</feature>
<feature type="transmembrane region" description="Helical" evidence="1">
    <location>
        <begin position="214"/>
        <end position="234"/>
    </location>
</feature>